<feature type="chain" id="PRO_0000418253" description="Membrane protein US15">
    <location>
        <begin position="1"/>
        <end position="262"/>
    </location>
</feature>
<feature type="transmembrane region" description="Helical" evidence="1">
    <location>
        <begin position="46"/>
        <end position="66"/>
    </location>
</feature>
<feature type="transmembrane region" description="Helical" evidence="1">
    <location>
        <begin position="77"/>
        <end position="97"/>
    </location>
</feature>
<feature type="transmembrane region" description="Helical" evidence="1">
    <location>
        <begin position="108"/>
        <end position="128"/>
    </location>
</feature>
<feature type="transmembrane region" description="Helical" evidence="1">
    <location>
        <begin position="133"/>
        <end position="153"/>
    </location>
</feature>
<feature type="transmembrane region" description="Helical" evidence="1">
    <location>
        <begin position="163"/>
        <end position="183"/>
    </location>
</feature>
<feature type="transmembrane region" description="Helical" evidence="1">
    <location>
        <begin position="186"/>
        <end position="206"/>
    </location>
</feature>
<feature type="transmembrane region" description="Helical" evidence="1">
    <location>
        <begin position="226"/>
        <end position="246"/>
    </location>
</feature>
<evidence type="ECO:0000255" key="1"/>
<evidence type="ECO:0000305" key="2"/>
<dbReference type="EMBL" id="AY446894">
    <property type="protein sequence ID" value="AAR31704.1"/>
    <property type="molecule type" value="Genomic_DNA"/>
</dbReference>
<dbReference type="RefSeq" id="YP_081600.1">
    <property type="nucleotide sequence ID" value="NC_006273.2"/>
</dbReference>
<dbReference type="DNASU" id="3077565"/>
<dbReference type="GeneID" id="3077565"/>
<dbReference type="KEGG" id="vg:3077565"/>
<dbReference type="Proteomes" id="UP000000938">
    <property type="component" value="Segment"/>
</dbReference>
<dbReference type="GO" id="GO:0033644">
    <property type="term" value="C:host cell membrane"/>
    <property type="evidence" value="ECO:0007669"/>
    <property type="project" value="UniProtKB-SubCell"/>
</dbReference>
<dbReference type="GO" id="GO:0016020">
    <property type="term" value="C:membrane"/>
    <property type="evidence" value="ECO:0007669"/>
    <property type="project" value="UniProtKB-KW"/>
</dbReference>
<dbReference type="InterPro" id="IPR006214">
    <property type="entry name" value="Bax_inhibitor_1-related"/>
</dbReference>
<dbReference type="Pfam" id="PF01027">
    <property type="entry name" value="Bax1-I"/>
    <property type="match status" value="1"/>
</dbReference>
<reference key="1">
    <citation type="journal article" date="2004" name="J. Gen. Virol.">
        <title>Genetic content of wild-type human cytomegalovirus.</title>
        <authorList>
            <person name="Dolan A."/>
            <person name="Cunningham C."/>
            <person name="Hector R.D."/>
            <person name="Hassan-Walker A.F."/>
            <person name="Lee L."/>
            <person name="Addison C."/>
            <person name="Dargan D.J."/>
            <person name="McGeoch D.J."/>
            <person name="Gatherer D."/>
            <person name="Emery V.C."/>
            <person name="Griffiths P.D."/>
            <person name="Sinzger C."/>
            <person name="McSharry B.P."/>
            <person name="Wilkinson G.W.G."/>
            <person name="Davison A.J."/>
        </authorList>
    </citation>
    <scope>NUCLEOTIDE SEQUENCE [LARGE SCALE GENOMIC DNA]</scope>
</reference>
<protein>
    <recommendedName>
        <fullName>Membrane protein US15</fullName>
    </recommendedName>
</protein>
<name>US15_HCMVM</name>
<sequence length="262" mass="29099">MRREKGFQVPTDGTVIYVPPGIQETRLATRSLAWVDCCRVALHTYGAVGWQLAGLTALLSAFCYAAPATWFHHSRLCLTESSPSLVFVIPVTSVIFIHCYETSHPSNIGVLLFYTLLHVPPLIVICLCLDGTLVISAALFTLLAFLSCTGVALLAPERTVRRQIVVIHALITLTFTAIVVVILRRGWSWCFKIVLSFSVLITCLAVSHFHEAALAVRYETPLERALLAAVKVFLSLVFTLLMVLRIMTLRTFLQTYFSSDKL</sequence>
<organism>
    <name type="scientific">Human cytomegalovirus (strain Merlin)</name>
    <name type="common">HHV-5</name>
    <name type="synonym">Human herpesvirus 5</name>
    <dbReference type="NCBI Taxonomy" id="295027"/>
    <lineage>
        <taxon>Viruses</taxon>
        <taxon>Duplodnaviria</taxon>
        <taxon>Heunggongvirae</taxon>
        <taxon>Peploviricota</taxon>
        <taxon>Herviviricetes</taxon>
        <taxon>Herpesvirales</taxon>
        <taxon>Orthoherpesviridae</taxon>
        <taxon>Betaherpesvirinae</taxon>
        <taxon>Cytomegalovirus</taxon>
        <taxon>Cytomegalovirus humanbeta5</taxon>
        <taxon>Human cytomegalovirus</taxon>
    </lineage>
</organism>
<proteinExistence type="inferred from homology"/>
<gene>
    <name type="primary">US15</name>
</gene>
<comment type="subcellular location">
    <subcellularLocation>
        <location evidence="2">Host membrane</location>
        <topology evidence="2">Multi-pass membrane protein</topology>
    </subcellularLocation>
</comment>
<comment type="similarity">
    <text evidence="2">Belongs to the HHV-5 US12 protein family.</text>
</comment>
<keyword id="KW-1043">Host membrane</keyword>
<keyword id="KW-0472">Membrane</keyword>
<keyword id="KW-1185">Reference proteome</keyword>
<keyword id="KW-0812">Transmembrane</keyword>
<keyword id="KW-1133">Transmembrane helix</keyword>
<organismHost>
    <name type="scientific">Homo sapiens</name>
    <name type="common">Human</name>
    <dbReference type="NCBI Taxonomy" id="9606"/>
</organismHost>
<accession>F5HFH0</accession>